<sequence length="342" mass="39093">MTKSLFRQSFLFDSLDLDHPMVAQTVRTEQGVTLKLHQRGVLEVIPAQTDAATKNMVISCGIHGDETAPMELLDKWIDDIVSGFQPVAERCLFIMAHPQATVRHVRFIEQNLNRLFDDKPHTPSTELAIADNLKVLLRQFFANTDEHSRWHLDLHCAIRGSKHYSFAVSPKARHPVRSRSLMQFIEQAHIEAVMLSNAPSSTFSWYSAEHYAAQALTLELGQVARLGENLLDRLLAFDLAMRDLISRHKPEHLPRKSVMYRVSRTIVRLHDDFDFRFSDDVENFTAFMHGEVFGHDGDKPLMAKNEGEAIVFPNRKVAIGQRAALMVCKVNTRYEDDQLVYD</sequence>
<keyword id="KW-0002">3D-structure</keyword>
<keyword id="KW-0056">Arginine metabolism</keyword>
<keyword id="KW-0378">Hydrolase</keyword>
<keyword id="KW-0479">Metal-binding</keyword>
<keyword id="KW-1185">Reference proteome</keyword>
<keyword id="KW-0862">Zinc</keyword>
<feature type="chain" id="PRO_0000174650" description="Succinylglutamate desuccinylase">
    <location>
        <begin position="1"/>
        <end position="342"/>
    </location>
</feature>
<feature type="active site" evidence="1">
    <location>
        <position position="219"/>
    </location>
</feature>
<feature type="binding site" evidence="1">
    <location>
        <position position="63"/>
    </location>
    <ligand>
        <name>Zn(2+)</name>
        <dbReference type="ChEBI" id="CHEBI:29105"/>
    </ligand>
</feature>
<feature type="binding site" evidence="1">
    <location>
        <position position="66"/>
    </location>
    <ligand>
        <name>Zn(2+)</name>
        <dbReference type="ChEBI" id="CHEBI:29105"/>
    </ligand>
</feature>
<feature type="binding site" evidence="1">
    <location>
        <position position="155"/>
    </location>
    <ligand>
        <name>Zn(2+)</name>
        <dbReference type="ChEBI" id="CHEBI:29105"/>
    </ligand>
</feature>
<feature type="turn" evidence="2">
    <location>
        <begin position="10"/>
        <end position="14"/>
    </location>
</feature>
<feature type="strand" evidence="2">
    <location>
        <begin position="17"/>
        <end position="19"/>
    </location>
</feature>
<feature type="strand" evidence="2">
    <location>
        <begin position="24"/>
        <end position="27"/>
    </location>
</feature>
<feature type="strand" evidence="2">
    <location>
        <begin position="33"/>
        <end position="38"/>
    </location>
</feature>
<feature type="strand" evidence="2">
    <location>
        <begin position="41"/>
        <end position="45"/>
    </location>
</feature>
<feature type="strand" evidence="2">
    <location>
        <begin position="55"/>
        <end position="60"/>
    </location>
</feature>
<feature type="strand" evidence="2">
    <location>
        <begin position="62"/>
        <end position="65"/>
    </location>
</feature>
<feature type="helix" evidence="2">
    <location>
        <begin position="68"/>
        <end position="81"/>
    </location>
</feature>
<feature type="strand" evidence="2">
    <location>
        <begin position="82"/>
        <end position="85"/>
    </location>
</feature>
<feature type="strand" evidence="2">
    <location>
        <begin position="89"/>
        <end position="94"/>
    </location>
</feature>
<feature type="helix" evidence="2">
    <location>
        <begin position="98"/>
        <end position="102"/>
    </location>
</feature>
<feature type="strand" evidence="2">
    <location>
        <begin position="108"/>
        <end position="110"/>
    </location>
</feature>
<feature type="strand" evidence="2">
    <location>
        <begin position="117"/>
        <end position="119"/>
    </location>
</feature>
<feature type="helix" evidence="2">
    <location>
        <begin position="125"/>
        <end position="140"/>
    </location>
</feature>
<feature type="turn" evidence="2">
    <location>
        <begin position="141"/>
        <end position="143"/>
    </location>
</feature>
<feature type="helix" evidence="2">
    <location>
        <begin position="146"/>
        <end position="148"/>
    </location>
</feature>
<feature type="strand" evidence="2">
    <location>
        <begin position="149"/>
        <end position="159"/>
    </location>
</feature>
<feature type="strand" evidence="2">
    <location>
        <begin position="161"/>
        <end position="169"/>
    </location>
</feature>
<feature type="helix" evidence="2">
    <location>
        <begin position="179"/>
        <end position="187"/>
    </location>
</feature>
<feature type="strand" evidence="2">
    <location>
        <begin position="191"/>
        <end position="195"/>
    </location>
</feature>
<feature type="helix" evidence="2">
    <location>
        <begin position="203"/>
        <end position="211"/>
    </location>
</feature>
<feature type="strand" evidence="2">
    <location>
        <begin position="214"/>
        <end position="222"/>
    </location>
</feature>
<feature type="turn" evidence="2">
    <location>
        <begin position="226"/>
        <end position="228"/>
    </location>
</feature>
<feature type="turn" evidence="2">
    <location>
        <begin position="231"/>
        <end position="234"/>
    </location>
</feature>
<feature type="helix" evidence="2">
    <location>
        <begin position="235"/>
        <end position="246"/>
    </location>
</feature>
<feature type="strand" evidence="2">
    <location>
        <begin position="258"/>
        <end position="267"/>
    </location>
</feature>
<feature type="strand" evidence="2">
    <location>
        <begin position="270"/>
        <end position="272"/>
    </location>
</feature>
<feature type="strand" evidence="2">
    <location>
        <begin position="297"/>
        <end position="299"/>
    </location>
</feature>
<feature type="strand" evidence="2">
    <location>
        <begin position="304"/>
        <end position="307"/>
    </location>
</feature>
<feature type="strand" evidence="2">
    <location>
        <begin position="309"/>
        <end position="311"/>
    </location>
</feature>
<feature type="strand" evidence="2">
    <location>
        <begin position="319"/>
        <end position="329"/>
    </location>
</feature>
<feature type="strand" evidence="2">
    <location>
        <begin position="332"/>
        <end position="341"/>
    </location>
</feature>
<dbReference type="EC" id="3.5.1.96" evidence="1"/>
<dbReference type="EMBL" id="AE003852">
    <property type="protein sequence ID" value="AAF94401.1"/>
    <property type="molecule type" value="Genomic_DNA"/>
</dbReference>
<dbReference type="PIR" id="E82224">
    <property type="entry name" value="E82224"/>
</dbReference>
<dbReference type="RefSeq" id="NP_230887.1">
    <property type="nucleotide sequence ID" value="NC_002505.1"/>
</dbReference>
<dbReference type="RefSeq" id="WP_000167426.1">
    <property type="nucleotide sequence ID" value="NZ_LT906614.1"/>
</dbReference>
<dbReference type="PDB" id="2G9D">
    <property type="method" value="X-ray"/>
    <property type="resolution" value="3.00 A"/>
    <property type="chains" value="A=1-342"/>
</dbReference>
<dbReference type="PDBsum" id="2G9D"/>
<dbReference type="SMR" id="Q9KSL4"/>
<dbReference type="STRING" id="243277.VC_1242"/>
<dbReference type="DNASU" id="2614679"/>
<dbReference type="EnsemblBacteria" id="AAF94401">
    <property type="protein sequence ID" value="AAF94401"/>
    <property type="gene ID" value="VC_1242"/>
</dbReference>
<dbReference type="KEGG" id="vch:VC_1242"/>
<dbReference type="PATRIC" id="fig|243277.26.peg.1183"/>
<dbReference type="eggNOG" id="COG2988">
    <property type="taxonomic scope" value="Bacteria"/>
</dbReference>
<dbReference type="HOGENOM" id="CLU_071608_0_0_6"/>
<dbReference type="UniPathway" id="UPA00185">
    <property type="reaction ID" value="UER00283"/>
</dbReference>
<dbReference type="EvolutionaryTrace" id="Q9KSL4"/>
<dbReference type="Proteomes" id="UP000000584">
    <property type="component" value="Chromosome 1"/>
</dbReference>
<dbReference type="GO" id="GO:0016811">
    <property type="term" value="F:hydrolase activity, acting on carbon-nitrogen (but not peptide) bonds, in linear amides"/>
    <property type="evidence" value="ECO:0000318"/>
    <property type="project" value="GO_Central"/>
</dbReference>
<dbReference type="GO" id="GO:0016788">
    <property type="term" value="F:hydrolase activity, acting on ester bonds"/>
    <property type="evidence" value="ECO:0007669"/>
    <property type="project" value="UniProtKB-UniRule"/>
</dbReference>
<dbReference type="GO" id="GO:0009017">
    <property type="term" value="F:succinylglutamate desuccinylase activity"/>
    <property type="evidence" value="ECO:0007669"/>
    <property type="project" value="UniProtKB-EC"/>
</dbReference>
<dbReference type="GO" id="GO:0008270">
    <property type="term" value="F:zinc ion binding"/>
    <property type="evidence" value="ECO:0007669"/>
    <property type="project" value="UniProtKB-UniRule"/>
</dbReference>
<dbReference type="GO" id="GO:0019544">
    <property type="term" value="P:arginine catabolic process to glutamate"/>
    <property type="evidence" value="ECO:0007669"/>
    <property type="project" value="UniProtKB-UniRule"/>
</dbReference>
<dbReference type="GO" id="GO:0019545">
    <property type="term" value="P:arginine catabolic process to succinate"/>
    <property type="evidence" value="ECO:0007669"/>
    <property type="project" value="UniProtKB-UniRule"/>
</dbReference>
<dbReference type="CDD" id="cd03855">
    <property type="entry name" value="M14_ASTE"/>
    <property type="match status" value="1"/>
</dbReference>
<dbReference type="FunFam" id="3.40.630.10:FF:000144">
    <property type="entry name" value="Succinylglutamate desuccinylase"/>
    <property type="match status" value="1"/>
</dbReference>
<dbReference type="Gene3D" id="3.40.630.10">
    <property type="entry name" value="Zn peptidases"/>
    <property type="match status" value="1"/>
</dbReference>
<dbReference type="HAMAP" id="MF_00767">
    <property type="entry name" value="Arg_catab_AstE"/>
    <property type="match status" value="1"/>
</dbReference>
<dbReference type="InterPro" id="IPR050178">
    <property type="entry name" value="AspA/AstE_fam"/>
</dbReference>
<dbReference type="InterPro" id="IPR055438">
    <property type="entry name" value="AstE_AspA_cat"/>
</dbReference>
<dbReference type="InterPro" id="IPR007036">
    <property type="entry name" value="Aste_AspA_hybrid_dom"/>
</dbReference>
<dbReference type="InterPro" id="IPR016681">
    <property type="entry name" value="SuccinylGlu_desuccinylase"/>
</dbReference>
<dbReference type="NCBIfam" id="NF003706">
    <property type="entry name" value="PRK05324.1"/>
    <property type="match status" value="1"/>
</dbReference>
<dbReference type="PANTHER" id="PTHR15162">
    <property type="entry name" value="ASPARTOACYLASE"/>
    <property type="match status" value="1"/>
</dbReference>
<dbReference type="PANTHER" id="PTHR15162:SF7">
    <property type="entry name" value="SUCCINYLGLUTAMATE DESUCCINYLASE"/>
    <property type="match status" value="1"/>
</dbReference>
<dbReference type="Pfam" id="PF24827">
    <property type="entry name" value="AstE_AspA_cat"/>
    <property type="match status" value="1"/>
</dbReference>
<dbReference type="Pfam" id="PF04952">
    <property type="entry name" value="AstE_AspA_hybrid"/>
    <property type="match status" value="1"/>
</dbReference>
<dbReference type="PIRSF" id="PIRSF017020">
    <property type="entry name" value="AstE"/>
    <property type="match status" value="1"/>
</dbReference>
<dbReference type="SUPFAM" id="SSF53187">
    <property type="entry name" value="Zn-dependent exopeptidases"/>
    <property type="match status" value="1"/>
</dbReference>
<reference key="1">
    <citation type="journal article" date="2000" name="Nature">
        <title>DNA sequence of both chromosomes of the cholera pathogen Vibrio cholerae.</title>
        <authorList>
            <person name="Heidelberg J.F."/>
            <person name="Eisen J.A."/>
            <person name="Nelson W.C."/>
            <person name="Clayton R.A."/>
            <person name="Gwinn M.L."/>
            <person name="Dodson R.J."/>
            <person name="Haft D.H."/>
            <person name="Hickey E.K."/>
            <person name="Peterson J.D."/>
            <person name="Umayam L.A."/>
            <person name="Gill S.R."/>
            <person name="Nelson K.E."/>
            <person name="Read T.D."/>
            <person name="Tettelin H."/>
            <person name="Richardson D.L."/>
            <person name="Ermolaeva M.D."/>
            <person name="Vamathevan J.J."/>
            <person name="Bass S."/>
            <person name="Qin H."/>
            <person name="Dragoi I."/>
            <person name="Sellers P."/>
            <person name="McDonald L.A."/>
            <person name="Utterback T.R."/>
            <person name="Fleischmann R.D."/>
            <person name="Nierman W.C."/>
            <person name="White O."/>
            <person name="Salzberg S.L."/>
            <person name="Smith H.O."/>
            <person name="Colwell R.R."/>
            <person name="Mekalanos J.J."/>
            <person name="Venter J.C."/>
            <person name="Fraser C.M."/>
        </authorList>
    </citation>
    <scope>NUCLEOTIDE SEQUENCE [LARGE SCALE GENOMIC DNA]</scope>
    <source>
        <strain>ATCC 39315 / El Tor Inaba N16961</strain>
    </source>
</reference>
<reference key="2">
    <citation type="submission" date="2006-04" db="PDB data bank">
        <title>Crystal structure of succinylglutamate desuccinylase from Vibrio cholerae, Northeast structural genomics target Vcr20.</title>
        <authorList>
            <consortium name="Northeast structural genomics consortium (NESG)"/>
        </authorList>
    </citation>
    <scope>X-RAY CRYSTALLOGRAPHY (3.0 ANGSTROMS)</scope>
</reference>
<evidence type="ECO:0000255" key="1">
    <source>
        <dbReference type="HAMAP-Rule" id="MF_00767"/>
    </source>
</evidence>
<evidence type="ECO:0007829" key="2">
    <source>
        <dbReference type="PDB" id="2G9D"/>
    </source>
</evidence>
<protein>
    <recommendedName>
        <fullName evidence="1">Succinylglutamate desuccinylase</fullName>
        <ecNumber evidence="1">3.5.1.96</ecNumber>
    </recommendedName>
</protein>
<gene>
    <name evidence="1" type="primary">astE</name>
    <name type="ordered locus">VC_1242</name>
</gene>
<organism>
    <name type="scientific">Vibrio cholerae serotype O1 (strain ATCC 39315 / El Tor Inaba N16961)</name>
    <dbReference type="NCBI Taxonomy" id="243277"/>
    <lineage>
        <taxon>Bacteria</taxon>
        <taxon>Pseudomonadati</taxon>
        <taxon>Pseudomonadota</taxon>
        <taxon>Gammaproteobacteria</taxon>
        <taxon>Vibrionales</taxon>
        <taxon>Vibrionaceae</taxon>
        <taxon>Vibrio</taxon>
    </lineage>
</organism>
<proteinExistence type="evidence at protein level"/>
<comment type="function">
    <text evidence="1">Transforms N(2)-succinylglutamate into succinate and glutamate.</text>
</comment>
<comment type="catalytic activity">
    <reaction evidence="1">
        <text>N-succinyl-L-glutamate + H2O = L-glutamate + succinate</text>
        <dbReference type="Rhea" id="RHEA:15169"/>
        <dbReference type="ChEBI" id="CHEBI:15377"/>
        <dbReference type="ChEBI" id="CHEBI:29985"/>
        <dbReference type="ChEBI" id="CHEBI:30031"/>
        <dbReference type="ChEBI" id="CHEBI:58763"/>
        <dbReference type="EC" id="3.5.1.96"/>
    </reaction>
</comment>
<comment type="cofactor">
    <cofactor evidence="1">
        <name>Zn(2+)</name>
        <dbReference type="ChEBI" id="CHEBI:29105"/>
    </cofactor>
    <text evidence="1">Binds 1 zinc ion per subunit.</text>
</comment>
<comment type="pathway">
    <text evidence="1">Amino-acid degradation; L-arginine degradation via AST pathway; L-glutamate and succinate from L-arginine: step 5/5.</text>
</comment>
<comment type="similarity">
    <text evidence="1">Belongs to the AspA/AstE family. Succinylglutamate desuccinylase subfamily.</text>
</comment>
<name>ASTE_VIBCH</name>
<accession>Q9KSL4</accession>